<gene>
    <name type="primary">NR2F6</name>
    <name type="synonym">EAR2</name>
    <name type="synonym">ERBAL2</name>
</gene>
<proteinExistence type="evidence at protein level"/>
<dbReference type="EMBL" id="X12794">
    <property type="protein sequence ID" value="CAA31282.1"/>
    <property type="molecule type" value="Genomic_DNA"/>
</dbReference>
<dbReference type="EMBL" id="AK314961">
    <property type="protein sequence ID" value="BAG37465.1"/>
    <property type="molecule type" value="mRNA"/>
</dbReference>
<dbReference type="EMBL" id="CH471106">
    <property type="protein sequence ID" value="EAW84580.1"/>
    <property type="molecule type" value="Genomic_DNA"/>
</dbReference>
<dbReference type="EMBL" id="BC002669">
    <property type="protein sequence ID" value="AAH02669.3"/>
    <property type="molecule type" value="mRNA"/>
</dbReference>
<dbReference type="EMBL" id="BC063018">
    <property type="protein sequence ID" value="AAH63018.2"/>
    <property type="molecule type" value="mRNA"/>
</dbReference>
<dbReference type="EMBL" id="BC084544">
    <property type="protein sequence ID" value="AAH84544.2"/>
    <property type="molecule type" value="mRNA"/>
</dbReference>
<dbReference type="CCDS" id="CCDS12352.1"/>
<dbReference type="PIR" id="S02709">
    <property type="entry name" value="S02709"/>
</dbReference>
<dbReference type="RefSeq" id="NP_005225.2">
    <property type="nucleotide sequence ID" value="NM_005234.3"/>
</dbReference>
<dbReference type="SMR" id="P10588"/>
<dbReference type="BioGRID" id="108375">
    <property type="interactions" value="46"/>
</dbReference>
<dbReference type="FunCoup" id="P10588">
    <property type="interactions" value="1735"/>
</dbReference>
<dbReference type="IntAct" id="P10588">
    <property type="interactions" value="40"/>
</dbReference>
<dbReference type="MINT" id="P10588"/>
<dbReference type="STRING" id="9606.ENSP00000291442"/>
<dbReference type="ChEMBL" id="CHEMBL1961791"/>
<dbReference type="iPTMnet" id="P10588"/>
<dbReference type="PhosphoSitePlus" id="P10588"/>
<dbReference type="BioMuta" id="NR2F6"/>
<dbReference type="DMDM" id="23503053"/>
<dbReference type="jPOST" id="P10588"/>
<dbReference type="MassIVE" id="P10588"/>
<dbReference type="PaxDb" id="9606-ENSP00000291442"/>
<dbReference type="PeptideAtlas" id="P10588"/>
<dbReference type="ProteomicsDB" id="52614"/>
<dbReference type="Pumba" id="P10588"/>
<dbReference type="Antibodypedia" id="14278">
    <property type="antibodies" value="387 antibodies from 35 providers"/>
</dbReference>
<dbReference type="DNASU" id="2063"/>
<dbReference type="Ensembl" id="ENST00000291442.4">
    <property type="protein sequence ID" value="ENSP00000291442.2"/>
    <property type="gene ID" value="ENSG00000160113.6"/>
</dbReference>
<dbReference type="GeneID" id="2063"/>
<dbReference type="KEGG" id="hsa:2063"/>
<dbReference type="MANE-Select" id="ENST00000291442.4">
    <property type="protein sequence ID" value="ENSP00000291442.2"/>
    <property type="RefSeq nucleotide sequence ID" value="NM_005234.4"/>
    <property type="RefSeq protein sequence ID" value="NP_005225.2"/>
</dbReference>
<dbReference type="UCSC" id="uc002nfq.4">
    <property type="organism name" value="human"/>
</dbReference>
<dbReference type="AGR" id="HGNC:7977"/>
<dbReference type="CTD" id="2063"/>
<dbReference type="DisGeNET" id="2063"/>
<dbReference type="GeneCards" id="NR2F6"/>
<dbReference type="HGNC" id="HGNC:7977">
    <property type="gene designation" value="NR2F6"/>
</dbReference>
<dbReference type="HPA" id="ENSG00000160113">
    <property type="expression patterns" value="Tissue enhanced (liver)"/>
</dbReference>
<dbReference type="MIM" id="132880">
    <property type="type" value="gene"/>
</dbReference>
<dbReference type="neXtProt" id="NX_P10588"/>
<dbReference type="OpenTargets" id="ENSG00000160113"/>
<dbReference type="PharmGKB" id="PA31760"/>
<dbReference type="VEuPathDB" id="HostDB:ENSG00000160113"/>
<dbReference type="eggNOG" id="KOG3575">
    <property type="taxonomic scope" value="Eukaryota"/>
</dbReference>
<dbReference type="GeneTree" id="ENSGT00940000160748"/>
<dbReference type="HOGENOM" id="CLU_007368_20_1_1"/>
<dbReference type="InParanoid" id="P10588"/>
<dbReference type="OMA" id="WARTIPY"/>
<dbReference type="OrthoDB" id="5873264at2759"/>
<dbReference type="PAN-GO" id="P10588">
    <property type="GO annotations" value="5 GO annotations based on evolutionary models"/>
</dbReference>
<dbReference type="PhylomeDB" id="P10588"/>
<dbReference type="TreeFam" id="TF352097"/>
<dbReference type="PathwayCommons" id="P10588"/>
<dbReference type="Reactome" id="R-HSA-383280">
    <property type="pathway name" value="Nuclear Receptor transcription pathway"/>
</dbReference>
<dbReference type="SignaLink" id="P10588"/>
<dbReference type="SIGNOR" id="P10588"/>
<dbReference type="BioGRID-ORCS" id="2063">
    <property type="hits" value="19 hits in 1188 CRISPR screens"/>
</dbReference>
<dbReference type="ChiTaRS" id="NR2F6">
    <property type="organism name" value="human"/>
</dbReference>
<dbReference type="GeneWiki" id="V-erbA-related_gene"/>
<dbReference type="GenomeRNAi" id="2063"/>
<dbReference type="Pharos" id="P10588">
    <property type="development level" value="Tbio"/>
</dbReference>
<dbReference type="PRO" id="PR:P10588"/>
<dbReference type="Proteomes" id="UP000005640">
    <property type="component" value="Chromosome 19"/>
</dbReference>
<dbReference type="RNAct" id="P10588">
    <property type="molecule type" value="protein"/>
</dbReference>
<dbReference type="Bgee" id="ENSG00000160113">
    <property type="expression patterns" value="Expressed in parotid gland and 200 other cell types or tissues"/>
</dbReference>
<dbReference type="ExpressionAtlas" id="P10588">
    <property type="expression patterns" value="baseline and differential"/>
</dbReference>
<dbReference type="GO" id="GO:0000785">
    <property type="term" value="C:chromatin"/>
    <property type="evidence" value="ECO:0000247"/>
    <property type="project" value="NTNU_SB"/>
</dbReference>
<dbReference type="GO" id="GO:0005739">
    <property type="term" value="C:mitochondrion"/>
    <property type="evidence" value="ECO:0006056"/>
    <property type="project" value="FlyBase"/>
</dbReference>
<dbReference type="GO" id="GO:0005654">
    <property type="term" value="C:nucleoplasm"/>
    <property type="evidence" value="ECO:0000304"/>
    <property type="project" value="Reactome"/>
</dbReference>
<dbReference type="GO" id="GO:0005634">
    <property type="term" value="C:nucleus"/>
    <property type="evidence" value="ECO:0000314"/>
    <property type="project" value="UniProtKB"/>
</dbReference>
<dbReference type="GO" id="GO:0003700">
    <property type="term" value="F:DNA-binding transcription factor activity"/>
    <property type="evidence" value="ECO:0000314"/>
    <property type="project" value="UniProtKB"/>
</dbReference>
<dbReference type="GO" id="GO:0000981">
    <property type="term" value="F:DNA-binding transcription factor activity, RNA polymerase II-specific"/>
    <property type="evidence" value="ECO:0000247"/>
    <property type="project" value="NTNU_SB"/>
</dbReference>
<dbReference type="GO" id="GO:0001227">
    <property type="term" value="F:DNA-binding transcription repressor activity, RNA polymerase II-specific"/>
    <property type="evidence" value="ECO:0007669"/>
    <property type="project" value="Ensembl"/>
</dbReference>
<dbReference type="GO" id="GO:0004879">
    <property type="term" value="F:nuclear receptor activity"/>
    <property type="evidence" value="ECO:0000318"/>
    <property type="project" value="GO_Central"/>
</dbReference>
<dbReference type="GO" id="GO:0000978">
    <property type="term" value="F:RNA polymerase II cis-regulatory region sequence-specific DNA binding"/>
    <property type="evidence" value="ECO:0000318"/>
    <property type="project" value="GO_Central"/>
</dbReference>
<dbReference type="GO" id="GO:0043565">
    <property type="term" value="F:sequence-specific DNA binding"/>
    <property type="evidence" value="ECO:0000314"/>
    <property type="project" value="UniProtKB"/>
</dbReference>
<dbReference type="GO" id="GO:1990837">
    <property type="term" value="F:sequence-specific double-stranded DNA binding"/>
    <property type="evidence" value="ECO:0000314"/>
    <property type="project" value="ARUK-UCL"/>
</dbReference>
<dbReference type="GO" id="GO:0008270">
    <property type="term" value="F:zinc ion binding"/>
    <property type="evidence" value="ECO:0007669"/>
    <property type="project" value="UniProtKB-KW"/>
</dbReference>
<dbReference type="GO" id="GO:0030154">
    <property type="term" value="P:cell differentiation"/>
    <property type="evidence" value="ECO:0000318"/>
    <property type="project" value="GO_Central"/>
</dbReference>
<dbReference type="GO" id="GO:0050965">
    <property type="term" value="P:detection of temperature stimulus involved in sensory perception of pain"/>
    <property type="evidence" value="ECO:0007669"/>
    <property type="project" value="Ensembl"/>
</dbReference>
<dbReference type="GO" id="GO:0043153">
    <property type="term" value="P:entrainment of circadian clock by photoperiod"/>
    <property type="evidence" value="ECO:0007669"/>
    <property type="project" value="Ensembl"/>
</dbReference>
<dbReference type="GO" id="GO:0000122">
    <property type="term" value="P:negative regulation of transcription by RNA polymerase II"/>
    <property type="evidence" value="ECO:0000314"/>
    <property type="project" value="UniProtKB"/>
</dbReference>
<dbReference type="GO" id="GO:0007399">
    <property type="term" value="P:nervous system development"/>
    <property type="evidence" value="ECO:0000318"/>
    <property type="project" value="GO_Central"/>
</dbReference>
<dbReference type="GO" id="GO:0048666">
    <property type="term" value="P:neuron development"/>
    <property type="evidence" value="ECO:0007669"/>
    <property type="project" value="Ensembl"/>
</dbReference>
<dbReference type="CDD" id="cd06958">
    <property type="entry name" value="NR_DBD_COUP_TF"/>
    <property type="match status" value="1"/>
</dbReference>
<dbReference type="CDD" id="cd06948">
    <property type="entry name" value="NR_LBD_COUP-TF"/>
    <property type="match status" value="1"/>
</dbReference>
<dbReference type="FunFam" id="3.30.50.10:FF:000016">
    <property type="entry name" value="Nuclear receptor subfamily 2 group F member 1"/>
    <property type="match status" value="1"/>
</dbReference>
<dbReference type="FunFam" id="1.10.565.10:FF:000020">
    <property type="entry name" value="Nuclear receptor subfamily 2 group F member 6"/>
    <property type="match status" value="1"/>
</dbReference>
<dbReference type="Gene3D" id="3.30.50.10">
    <property type="entry name" value="Erythroid Transcription Factor GATA-1, subunit A"/>
    <property type="match status" value="1"/>
</dbReference>
<dbReference type="Gene3D" id="1.10.565.10">
    <property type="entry name" value="Retinoid X Receptor"/>
    <property type="match status" value="1"/>
</dbReference>
<dbReference type="InterPro" id="IPR035500">
    <property type="entry name" value="NHR-like_dom_sf"/>
</dbReference>
<dbReference type="InterPro" id="IPR000536">
    <property type="entry name" value="Nucl_hrmn_rcpt_lig-bd"/>
</dbReference>
<dbReference type="InterPro" id="IPR050274">
    <property type="entry name" value="Nuclear_hormone_rcpt_NR2"/>
</dbReference>
<dbReference type="InterPro" id="IPR001723">
    <property type="entry name" value="Nuclear_hrmn_rcpt"/>
</dbReference>
<dbReference type="InterPro" id="IPR001628">
    <property type="entry name" value="Znf_hrmn_rcpt"/>
</dbReference>
<dbReference type="InterPro" id="IPR013088">
    <property type="entry name" value="Znf_NHR/GATA"/>
</dbReference>
<dbReference type="PANTHER" id="PTHR24083">
    <property type="entry name" value="NUCLEAR HORMONE RECEPTOR"/>
    <property type="match status" value="1"/>
</dbReference>
<dbReference type="Pfam" id="PF00104">
    <property type="entry name" value="Hormone_recep"/>
    <property type="match status" value="1"/>
</dbReference>
<dbReference type="Pfam" id="PF00105">
    <property type="entry name" value="zf-C4"/>
    <property type="match status" value="1"/>
</dbReference>
<dbReference type="PRINTS" id="PR01282">
    <property type="entry name" value="COUPTNFACTOR"/>
</dbReference>
<dbReference type="PRINTS" id="PR00398">
    <property type="entry name" value="STRDHORMONER"/>
</dbReference>
<dbReference type="PRINTS" id="PR00047">
    <property type="entry name" value="STROIDFINGER"/>
</dbReference>
<dbReference type="SMART" id="SM00430">
    <property type="entry name" value="HOLI"/>
    <property type="match status" value="1"/>
</dbReference>
<dbReference type="SMART" id="SM00399">
    <property type="entry name" value="ZnF_C4"/>
    <property type="match status" value="1"/>
</dbReference>
<dbReference type="SUPFAM" id="SSF57716">
    <property type="entry name" value="Glucocorticoid receptor-like (DNA-binding domain)"/>
    <property type="match status" value="1"/>
</dbReference>
<dbReference type="SUPFAM" id="SSF48508">
    <property type="entry name" value="Nuclear receptor ligand-binding domain"/>
    <property type="match status" value="1"/>
</dbReference>
<dbReference type="PROSITE" id="PS51843">
    <property type="entry name" value="NR_LBD"/>
    <property type="match status" value="1"/>
</dbReference>
<dbReference type="PROSITE" id="PS00031">
    <property type="entry name" value="NUCLEAR_REC_DBD_1"/>
    <property type="match status" value="1"/>
</dbReference>
<dbReference type="PROSITE" id="PS51030">
    <property type="entry name" value="NUCLEAR_REC_DBD_2"/>
    <property type="match status" value="1"/>
</dbReference>
<comment type="function">
    <text evidence="6 7 8 9">Transcription factor predominantly involved in transcriptional repression. Binds to promoter/enhancer response elements that contain the imperfect 5'-AGGTCA-3' direct or inverted repeats with various spacings which are also recognized by other nuclear hormone receptors. Involved in modulation of hormonal responses. Represses transcriptional activity of the lutropin-choriogonadotropic hormone receptor/LHCGR gene, the renin/REN gene and the oxytocin-neurophysin/OXT gene. Represses the triiodothyronine-dependent and -independent transcriptional activity of the thyroid hormone receptor gene in a cell type-specific manner. The corepressing function towards thyroid hormone receptor beta/THRB involves at least in part the inhibition of THRB binding to triiodothyronine response elements (TREs) by NR2F6. Inhibits NFATC transcription factor DNA binding and subsequently its transcriptional activity. Acts as transcriptional repressor of IL-17 expression in Th-17 differentiated CD4(+) T cells and may be involved in induction and/or maintenance of peripheral immunological tolerance and autoimmunity. Involved in development of forebrain circadian clock; is required early in the development of the locus coeruleus (LC).</text>
</comment>
<comment type="subunit">
    <text evidence="1 7 8">Binds DNA as dimer; homodimer and heterodimer with NR2F2 and probably NR2F1 (By similarity). Interacts with THRB.</text>
</comment>
<comment type="interaction">
    <interactant intactId="EBI-2681496">
        <id>P10588</id>
    </interactant>
    <interactant intactId="EBI-78129">
        <id>P83916</id>
        <label>CBX1</label>
    </interactant>
    <organismsDiffer>false</organismsDiffer>
    <experiments>2</experiments>
</comment>
<comment type="interaction">
    <interactant intactId="EBI-2681496">
        <id>P10588</id>
    </interactant>
    <interactant intactId="EBI-356392">
        <id>P55209</id>
        <label>NAP1L1</label>
    </interactant>
    <organismsDiffer>false</organismsDiffer>
    <experiments>2</experiments>
</comment>
<comment type="interaction">
    <interactant intactId="EBI-2681496">
        <id>P10588</id>
    </interactant>
    <interactant intactId="EBI-2795198">
        <id>P24468</id>
        <label>NR2F2</label>
    </interactant>
    <organismsDiffer>false</organismsDiffer>
    <experiments>3</experiments>
</comment>
<comment type="subcellular location">
    <subcellularLocation>
        <location evidence="3 6 9">Nucleus</location>
    </subcellularLocation>
</comment>
<comment type="tissue specificity">
    <text evidence="7">Expressed in heart, placenta, liver, skeletal muscle, kidney and pancreas.</text>
</comment>
<comment type="induction">
    <text evidence="8">Inhibited by gonadotropin in granulosa cells.</text>
</comment>
<comment type="similarity">
    <text evidence="10">Belongs to the nuclear hormone receptor family. NR2 subfamily.</text>
</comment>
<keyword id="KW-0238">DNA-binding</keyword>
<keyword id="KW-0479">Metal-binding</keyword>
<keyword id="KW-0539">Nucleus</keyword>
<keyword id="KW-0597">Phosphoprotein</keyword>
<keyword id="KW-1267">Proteomics identification</keyword>
<keyword id="KW-0675">Receptor</keyword>
<keyword id="KW-1185">Reference proteome</keyword>
<keyword id="KW-0678">Repressor</keyword>
<keyword id="KW-0804">Transcription</keyword>
<keyword id="KW-0805">Transcription regulation</keyword>
<keyword id="KW-0862">Zinc</keyword>
<keyword id="KW-0863">Zinc-finger</keyword>
<name>NR2F6_HUMAN</name>
<sequence>MAMVTGGWGGPGGDTNGVDKAGGYPRAAEDDSASPPGAASDAEPGDEERPGLQVDCVVCGDKSSGKHYGVFTCEGCKSFFKRSIRRNLSYTCRSNRDCQIDQHHRNQCQYCRLKKCFRVGMRKEAVQRGRIPHSLPGAVAASSGSPPGSALAAVASGGDLFPGQPVSELIAQLLRAEPYPAAAGRFGAGGGAAGAVLGIDNVCELAARLLFSTVEWARHAPFFPELPVADQVALLRLSWSELFVLNAAQAALPLHTAPLLAAAGLHAAPMAAERAVAFMDQVRAFQEQVDKLGRLQVDSAEYGCLKAIALFTPDACGLSDPAHVESLQEKAQVALTEYVRAQYPSQPQRFGRLLLRLPALRAVPASLISQLFFMRLVGKTPIETLIRDMLLSGSTFNWPYGSGQ</sequence>
<protein>
    <recommendedName>
        <fullName>Nuclear receptor subfamily 2 group F member 6</fullName>
    </recommendedName>
    <alternativeName>
        <fullName>V-erbA-related protein 2</fullName>
        <shortName>EAR-2</shortName>
    </alternativeName>
</protein>
<organism>
    <name type="scientific">Homo sapiens</name>
    <name type="common">Human</name>
    <dbReference type="NCBI Taxonomy" id="9606"/>
    <lineage>
        <taxon>Eukaryota</taxon>
        <taxon>Metazoa</taxon>
        <taxon>Chordata</taxon>
        <taxon>Craniata</taxon>
        <taxon>Vertebrata</taxon>
        <taxon>Euteleostomi</taxon>
        <taxon>Mammalia</taxon>
        <taxon>Eutheria</taxon>
        <taxon>Euarchontoglires</taxon>
        <taxon>Primates</taxon>
        <taxon>Haplorrhini</taxon>
        <taxon>Catarrhini</taxon>
        <taxon>Hominidae</taxon>
        <taxon>Homo</taxon>
    </lineage>
</organism>
<accession>P10588</accession>
<accession>B2RC68</accession>
<accession>Q5XGA0</accession>
<accession>Q6P586</accession>
<accession>Q9BUE8</accession>
<evidence type="ECO:0000250" key="1"/>
<evidence type="ECO:0000250" key="2">
    <source>
        <dbReference type="UniProtKB" id="P43136"/>
    </source>
</evidence>
<evidence type="ECO:0000255" key="3">
    <source>
        <dbReference type="PROSITE-ProRule" id="PRU00407"/>
    </source>
</evidence>
<evidence type="ECO:0000255" key="4">
    <source>
        <dbReference type="PROSITE-ProRule" id="PRU01189"/>
    </source>
</evidence>
<evidence type="ECO:0000256" key="5">
    <source>
        <dbReference type="SAM" id="MobiDB-lite"/>
    </source>
</evidence>
<evidence type="ECO:0000269" key="6">
    <source>
    </source>
</evidence>
<evidence type="ECO:0000269" key="7">
    <source>
    </source>
</evidence>
<evidence type="ECO:0000269" key="8">
    <source>
    </source>
</evidence>
<evidence type="ECO:0000269" key="9">
    <source>
    </source>
</evidence>
<evidence type="ECO:0000305" key="10"/>
<evidence type="ECO:0007744" key="11">
    <source>
    </source>
</evidence>
<evidence type="ECO:0007744" key="12">
    <source>
    </source>
</evidence>
<feature type="chain" id="PRO_0000053613" description="Nuclear receptor subfamily 2 group F member 6">
    <location>
        <begin position="1"/>
        <end position="404"/>
    </location>
</feature>
<feature type="domain" description="NR LBD" evidence="4">
    <location>
        <begin position="165"/>
        <end position="393"/>
    </location>
</feature>
<feature type="DNA-binding region" description="Nuclear receptor" evidence="3">
    <location>
        <begin position="53"/>
        <end position="128"/>
    </location>
</feature>
<feature type="zinc finger region" description="NR C4-type" evidence="3">
    <location>
        <begin position="56"/>
        <end position="76"/>
    </location>
</feature>
<feature type="zinc finger region" description="NR C4-type" evidence="3">
    <location>
        <begin position="92"/>
        <end position="116"/>
    </location>
</feature>
<feature type="region of interest" description="Disordered" evidence="5">
    <location>
        <begin position="1"/>
        <end position="49"/>
    </location>
</feature>
<feature type="region of interest" description="Important for dimerization" evidence="1">
    <location>
        <begin position="327"/>
        <end position="404"/>
    </location>
</feature>
<feature type="compositionally biased region" description="Gly residues" evidence="5">
    <location>
        <begin position="1"/>
        <end position="15"/>
    </location>
</feature>
<feature type="compositionally biased region" description="Low complexity" evidence="5">
    <location>
        <begin position="33"/>
        <end position="42"/>
    </location>
</feature>
<feature type="modified residue" description="Phosphoserine" evidence="2">
    <location>
        <position position="34"/>
    </location>
</feature>
<feature type="modified residue" description="Phosphoserine" evidence="11 12">
    <location>
        <position position="40"/>
    </location>
</feature>
<feature type="modified residue" description="Phosphoserine" evidence="9">
    <location>
        <position position="83"/>
    </location>
</feature>
<feature type="mutagenesis site" description="Loss of DNA (TRE) binding. Reduces the corepressor activity towards THRB." evidence="7">
    <original>EGCKS</original>
    <variation>GSCKV</variation>
    <location>
        <begin position="74"/>
        <end position="78"/>
    </location>
</feature>
<feature type="sequence conflict" description="In Ref. 1; CAA31282." evidence="10" ref="1">
    <original>S</original>
    <variation>T</variation>
    <location>
        <position position="83"/>
    </location>
</feature>
<feature type="sequence conflict" description="In Ref. 1; CAA31282." evidence="10" ref="1">
    <original>AP</original>
    <variation>G</variation>
    <location>
        <begin position="220"/>
        <end position="221"/>
    </location>
</feature>
<feature type="sequence conflict" description="In Ref. 1; CAA31282." evidence="10" ref="1">
    <original>L</original>
    <variation>M</variation>
    <location>
        <position position="237"/>
    </location>
</feature>
<reference key="1">
    <citation type="journal article" date="1988" name="Nucleic Acids Res.">
        <title>Identification of two novel members of erbA superfamily by molecular cloning: the gene products of the two are highly related to each other.</title>
        <authorList>
            <person name="Miyajima N."/>
            <person name="Kadowaki Y."/>
            <person name="Fukushige S."/>
            <person name="Shimizu S."/>
            <person name="Semba K."/>
            <person name="Yamanashi Y."/>
            <person name="Matsubara K."/>
            <person name="Toyoshima K."/>
            <person name="Yamamoto T."/>
        </authorList>
    </citation>
    <scope>NUCLEOTIDE SEQUENCE [GENOMIC DNA]</scope>
    <source>
        <tissue>Fetal lung</tissue>
    </source>
</reference>
<reference key="2">
    <citation type="journal article" date="2004" name="Nat. Genet.">
        <title>Complete sequencing and characterization of 21,243 full-length human cDNAs.</title>
        <authorList>
            <person name="Ota T."/>
            <person name="Suzuki Y."/>
            <person name="Nishikawa T."/>
            <person name="Otsuki T."/>
            <person name="Sugiyama T."/>
            <person name="Irie R."/>
            <person name="Wakamatsu A."/>
            <person name="Hayashi K."/>
            <person name="Sato H."/>
            <person name="Nagai K."/>
            <person name="Kimura K."/>
            <person name="Makita H."/>
            <person name="Sekine M."/>
            <person name="Obayashi M."/>
            <person name="Nishi T."/>
            <person name="Shibahara T."/>
            <person name="Tanaka T."/>
            <person name="Ishii S."/>
            <person name="Yamamoto J."/>
            <person name="Saito K."/>
            <person name="Kawai Y."/>
            <person name="Isono Y."/>
            <person name="Nakamura Y."/>
            <person name="Nagahari K."/>
            <person name="Murakami K."/>
            <person name="Yasuda T."/>
            <person name="Iwayanagi T."/>
            <person name="Wagatsuma M."/>
            <person name="Shiratori A."/>
            <person name="Sudo H."/>
            <person name="Hosoiri T."/>
            <person name="Kaku Y."/>
            <person name="Kodaira H."/>
            <person name="Kondo H."/>
            <person name="Sugawara M."/>
            <person name="Takahashi M."/>
            <person name="Kanda K."/>
            <person name="Yokoi T."/>
            <person name="Furuya T."/>
            <person name="Kikkawa E."/>
            <person name="Omura Y."/>
            <person name="Abe K."/>
            <person name="Kamihara K."/>
            <person name="Katsuta N."/>
            <person name="Sato K."/>
            <person name="Tanikawa M."/>
            <person name="Yamazaki M."/>
            <person name="Ninomiya K."/>
            <person name="Ishibashi T."/>
            <person name="Yamashita H."/>
            <person name="Murakawa K."/>
            <person name="Fujimori K."/>
            <person name="Tanai H."/>
            <person name="Kimata M."/>
            <person name="Watanabe M."/>
            <person name="Hiraoka S."/>
            <person name="Chiba Y."/>
            <person name="Ishida S."/>
            <person name="Ono Y."/>
            <person name="Takiguchi S."/>
            <person name="Watanabe S."/>
            <person name="Yosida M."/>
            <person name="Hotuta T."/>
            <person name="Kusano J."/>
            <person name="Kanehori K."/>
            <person name="Takahashi-Fujii A."/>
            <person name="Hara H."/>
            <person name="Tanase T.-O."/>
            <person name="Nomura Y."/>
            <person name="Togiya S."/>
            <person name="Komai F."/>
            <person name="Hara R."/>
            <person name="Takeuchi K."/>
            <person name="Arita M."/>
            <person name="Imose N."/>
            <person name="Musashino K."/>
            <person name="Yuuki H."/>
            <person name="Oshima A."/>
            <person name="Sasaki N."/>
            <person name="Aotsuka S."/>
            <person name="Yoshikawa Y."/>
            <person name="Matsunawa H."/>
            <person name="Ichihara T."/>
            <person name="Shiohata N."/>
            <person name="Sano S."/>
            <person name="Moriya S."/>
            <person name="Momiyama H."/>
            <person name="Satoh N."/>
            <person name="Takami S."/>
            <person name="Terashima Y."/>
            <person name="Suzuki O."/>
            <person name="Nakagawa S."/>
            <person name="Senoh A."/>
            <person name="Mizoguchi H."/>
            <person name="Goto Y."/>
            <person name="Shimizu F."/>
            <person name="Wakebe H."/>
            <person name="Hishigaki H."/>
            <person name="Watanabe T."/>
            <person name="Sugiyama A."/>
            <person name="Takemoto M."/>
            <person name="Kawakami B."/>
            <person name="Yamazaki M."/>
            <person name="Watanabe K."/>
            <person name="Kumagai A."/>
            <person name="Itakura S."/>
            <person name="Fukuzumi Y."/>
            <person name="Fujimori Y."/>
            <person name="Komiyama M."/>
            <person name="Tashiro H."/>
            <person name="Tanigami A."/>
            <person name="Fujiwara T."/>
            <person name="Ono T."/>
            <person name="Yamada K."/>
            <person name="Fujii Y."/>
            <person name="Ozaki K."/>
            <person name="Hirao M."/>
            <person name="Ohmori Y."/>
            <person name="Kawabata A."/>
            <person name="Hikiji T."/>
            <person name="Kobatake N."/>
            <person name="Inagaki H."/>
            <person name="Ikema Y."/>
            <person name="Okamoto S."/>
            <person name="Okitani R."/>
            <person name="Kawakami T."/>
            <person name="Noguchi S."/>
            <person name="Itoh T."/>
            <person name="Shigeta K."/>
            <person name="Senba T."/>
            <person name="Matsumura K."/>
            <person name="Nakajima Y."/>
            <person name="Mizuno T."/>
            <person name="Morinaga M."/>
            <person name="Sasaki M."/>
            <person name="Togashi T."/>
            <person name="Oyama M."/>
            <person name="Hata H."/>
            <person name="Watanabe M."/>
            <person name="Komatsu T."/>
            <person name="Mizushima-Sugano J."/>
            <person name="Satoh T."/>
            <person name="Shirai Y."/>
            <person name="Takahashi Y."/>
            <person name="Nakagawa K."/>
            <person name="Okumura K."/>
            <person name="Nagase T."/>
            <person name="Nomura N."/>
            <person name="Kikuchi H."/>
            <person name="Masuho Y."/>
            <person name="Yamashita R."/>
            <person name="Nakai K."/>
            <person name="Yada T."/>
            <person name="Nakamura Y."/>
            <person name="Ohara O."/>
            <person name="Isogai T."/>
            <person name="Sugano S."/>
        </authorList>
    </citation>
    <scope>NUCLEOTIDE SEQUENCE [LARGE SCALE MRNA]</scope>
</reference>
<reference key="3">
    <citation type="submission" date="2005-07" db="EMBL/GenBank/DDBJ databases">
        <authorList>
            <person name="Mural R.J."/>
            <person name="Istrail S."/>
            <person name="Sutton G.G."/>
            <person name="Florea L."/>
            <person name="Halpern A.L."/>
            <person name="Mobarry C.M."/>
            <person name="Lippert R."/>
            <person name="Walenz B."/>
            <person name="Shatkay H."/>
            <person name="Dew I."/>
            <person name="Miller J.R."/>
            <person name="Flanigan M.J."/>
            <person name="Edwards N.J."/>
            <person name="Bolanos R."/>
            <person name="Fasulo D."/>
            <person name="Halldorsson B.V."/>
            <person name="Hannenhalli S."/>
            <person name="Turner R."/>
            <person name="Yooseph S."/>
            <person name="Lu F."/>
            <person name="Nusskern D.R."/>
            <person name="Shue B.C."/>
            <person name="Zheng X.H."/>
            <person name="Zhong F."/>
            <person name="Delcher A.L."/>
            <person name="Huson D.H."/>
            <person name="Kravitz S.A."/>
            <person name="Mouchard L."/>
            <person name="Reinert K."/>
            <person name="Remington K.A."/>
            <person name="Clark A.G."/>
            <person name="Waterman M.S."/>
            <person name="Eichler E.E."/>
            <person name="Adams M.D."/>
            <person name="Hunkapiller M.W."/>
            <person name="Myers E.W."/>
            <person name="Venter J.C."/>
        </authorList>
    </citation>
    <scope>NUCLEOTIDE SEQUENCE [LARGE SCALE GENOMIC DNA]</scope>
</reference>
<reference key="4">
    <citation type="journal article" date="2004" name="Genome Res.">
        <title>The status, quality, and expansion of the NIH full-length cDNA project: the Mammalian Gene Collection (MGC).</title>
        <authorList>
            <consortium name="The MGC Project Team"/>
        </authorList>
    </citation>
    <scope>NUCLEOTIDE SEQUENCE [LARGE SCALE MRNA]</scope>
    <source>
        <tissue>Kidney</tissue>
        <tissue>Pancreas</tissue>
        <tissue>Uterus</tissue>
    </source>
</reference>
<reference key="5">
    <citation type="journal article" date="2000" name="J. Biol. Chem.">
        <title>Nuclear orphan receptors regulate transcription of the gene for the human luteinizing hormone receptor.</title>
        <authorList>
            <person name="Zhang Y."/>
            <person name="Dufau M.L."/>
        </authorList>
    </citation>
    <scope>FUNCTION</scope>
    <scope>SUBCELLULAR LOCATION</scope>
</reference>
<reference key="6">
    <citation type="journal article" date="2000" name="Mol. Cell. Biol.">
        <title>The orphan nuclear receptor Ear-2 is a negative coregulator for thyroid hormone nuclear receptor function.</title>
        <authorList>
            <person name="Zhu X.G."/>
            <person name="Park K.S."/>
            <person name="Kaneshige M."/>
            <person name="Bhat M.K."/>
            <person name="Zhu Q."/>
            <person name="Mariash C.N."/>
            <person name="McPhie P."/>
            <person name="Cheng S.Y."/>
        </authorList>
    </citation>
    <scope>FUNCTION</scope>
    <scope>TISSUE SPECIFICITY</scope>
    <scope>DNA-BINDING</scope>
    <scope>INTERACTION WITH THRB</scope>
    <scope>MUTAGENESIS OF 74-GLU--SER-78</scope>
</reference>
<reference key="7">
    <citation type="journal article" date="2001" name="Mol. Endocrinol.">
        <title>EAR2 and EAR3/COUP-TFI regulate transcription of the rat LH receptor.</title>
        <authorList>
            <person name="Zhang Y."/>
            <person name="Dufau M.L."/>
        </authorList>
    </citation>
    <scope>FUNCTION</scope>
    <scope>SUBUNIT</scope>
    <scope>INDUCTION BY GONADOTROPIN</scope>
</reference>
<reference key="8">
    <citation type="journal article" date="2008" name="Immunity">
        <title>The nuclear orphan receptor NR2F6 suppresses lymphocyte activation and T helper 17-dependent autoimmunity.</title>
        <authorList>
            <person name="Hermann-Kleiter N."/>
            <person name="Gruber T."/>
            <person name="Lutz-Nicoladoni C."/>
            <person name="Thuille N."/>
            <person name="Fresser F."/>
            <person name="Labi V."/>
            <person name="Schiefermeier N."/>
            <person name="Warnecke M."/>
            <person name="Huber L."/>
            <person name="Villunger A."/>
            <person name="Eichele G."/>
            <person name="Kaminski S."/>
            <person name="Baier G."/>
        </authorList>
    </citation>
    <scope>FUNCTION</scope>
    <scope>SUBCELLULAR LOCATION</scope>
    <scope>PHOSPHORYLATION AT SER-83</scope>
</reference>
<reference key="9">
    <citation type="journal article" date="2008" name="Proc. Natl. Acad. Sci. U.S.A.">
        <title>A quantitative atlas of mitotic phosphorylation.</title>
        <authorList>
            <person name="Dephoure N."/>
            <person name="Zhou C."/>
            <person name="Villen J."/>
            <person name="Beausoleil S.A."/>
            <person name="Bakalarski C.E."/>
            <person name="Elledge S.J."/>
            <person name="Gygi S.P."/>
        </authorList>
    </citation>
    <scope>PHOSPHORYLATION [LARGE SCALE ANALYSIS] AT SER-40</scope>
    <scope>IDENTIFICATION BY MASS SPECTROMETRY [LARGE SCALE ANALYSIS]</scope>
    <source>
        <tissue>Cervix carcinoma</tissue>
    </source>
</reference>
<reference key="10">
    <citation type="journal article" date="2009" name="Anal. Chem.">
        <title>Lys-N and trypsin cover complementary parts of the phosphoproteome in a refined SCX-based approach.</title>
        <authorList>
            <person name="Gauci S."/>
            <person name="Helbig A.O."/>
            <person name="Slijper M."/>
            <person name="Krijgsveld J."/>
            <person name="Heck A.J."/>
            <person name="Mohammed S."/>
        </authorList>
    </citation>
    <scope>IDENTIFICATION BY MASS SPECTROMETRY [LARGE SCALE ANALYSIS]</scope>
</reference>
<reference key="11">
    <citation type="journal article" date="2010" name="Sci. Signal.">
        <title>Quantitative phosphoproteomics reveals widespread full phosphorylation site occupancy during mitosis.</title>
        <authorList>
            <person name="Olsen J.V."/>
            <person name="Vermeulen M."/>
            <person name="Santamaria A."/>
            <person name="Kumar C."/>
            <person name="Miller M.L."/>
            <person name="Jensen L.J."/>
            <person name="Gnad F."/>
            <person name="Cox J."/>
            <person name="Jensen T.S."/>
            <person name="Nigg E.A."/>
            <person name="Brunak S."/>
            <person name="Mann M."/>
        </authorList>
    </citation>
    <scope>IDENTIFICATION BY MASS SPECTROMETRY [LARGE SCALE ANALYSIS]</scope>
    <source>
        <tissue>Cervix carcinoma</tissue>
    </source>
</reference>
<reference key="12">
    <citation type="journal article" date="2014" name="J. Proteomics">
        <title>An enzyme assisted RP-RPLC approach for in-depth analysis of human liver phosphoproteome.</title>
        <authorList>
            <person name="Bian Y."/>
            <person name="Song C."/>
            <person name="Cheng K."/>
            <person name="Dong M."/>
            <person name="Wang F."/>
            <person name="Huang J."/>
            <person name="Sun D."/>
            <person name="Wang L."/>
            <person name="Ye M."/>
            <person name="Zou H."/>
        </authorList>
    </citation>
    <scope>PHOSPHORYLATION [LARGE SCALE ANALYSIS] AT SER-40</scope>
    <scope>IDENTIFICATION BY MASS SPECTROMETRY [LARGE SCALE ANALYSIS]</scope>
    <source>
        <tissue>Liver</tissue>
    </source>
</reference>